<accession>Q8BP56</accession>
<accession>Q571E9</accession>
<accession>Q8R585</accession>
<name>PGGHG_MOUSE</name>
<organism>
    <name type="scientific">Mus musculus</name>
    <name type="common">Mouse</name>
    <dbReference type="NCBI Taxonomy" id="10090"/>
    <lineage>
        <taxon>Eukaryota</taxon>
        <taxon>Metazoa</taxon>
        <taxon>Chordata</taxon>
        <taxon>Craniata</taxon>
        <taxon>Vertebrata</taxon>
        <taxon>Euteleostomi</taxon>
        <taxon>Mammalia</taxon>
        <taxon>Eutheria</taxon>
        <taxon>Euarchontoglires</taxon>
        <taxon>Glires</taxon>
        <taxon>Rodentia</taxon>
        <taxon>Myomorpha</taxon>
        <taxon>Muroidea</taxon>
        <taxon>Muridae</taxon>
        <taxon>Murinae</taxon>
        <taxon>Mus</taxon>
        <taxon>Mus</taxon>
    </lineage>
</organism>
<protein>
    <recommendedName>
        <fullName evidence="2">Protein-glucosylgalactosylhydroxylysine glucosidase</fullName>
        <ecNumber evidence="2">3.2.1.107</ecNumber>
    </recommendedName>
    <alternativeName>
        <fullName evidence="2">Acid trehalase-like protein 1</fullName>
    </alternativeName>
</protein>
<dbReference type="EC" id="3.2.1.107" evidence="2"/>
<dbReference type="EMBL" id="AK077662">
    <property type="protein sequence ID" value="BAC36936.1"/>
    <property type="molecule type" value="mRNA"/>
</dbReference>
<dbReference type="EMBL" id="AK220240">
    <property type="protein sequence ID" value="BAD90165.1"/>
    <property type="status" value="ALT_INIT"/>
    <property type="molecule type" value="Transcribed_RNA"/>
</dbReference>
<dbReference type="EMBL" id="BC023151">
    <property type="status" value="NOT_ANNOTATED_CDS"/>
    <property type="molecule type" value="mRNA"/>
</dbReference>
<dbReference type="EMBL" id="BC056953">
    <property type="protein sequence ID" value="AAH56953.1"/>
    <property type="molecule type" value="mRNA"/>
</dbReference>
<dbReference type="CCDS" id="CCDS21992.1">
    <molecule id="Q8BP56-1"/>
</dbReference>
<dbReference type="RefSeq" id="NP_663362.2">
    <molecule id="Q8BP56-1"/>
    <property type="nucleotide sequence ID" value="NM_145387.4"/>
</dbReference>
<dbReference type="SMR" id="Q8BP56"/>
<dbReference type="FunCoup" id="Q8BP56">
    <property type="interactions" value="408"/>
</dbReference>
<dbReference type="STRING" id="10090.ENSMUSP00000078372"/>
<dbReference type="CAZy" id="GH65">
    <property type="family name" value="Glycoside Hydrolase Family 65"/>
</dbReference>
<dbReference type="iPTMnet" id="Q8BP56"/>
<dbReference type="PhosphoSitePlus" id="Q8BP56"/>
<dbReference type="PaxDb" id="10090-ENSMUSP00000078372"/>
<dbReference type="PeptideAtlas" id="Q8BP56"/>
<dbReference type="ProteomicsDB" id="301802">
    <molecule id="Q8BP56-1"/>
</dbReference>
<dbReference type="ProteomicsDB" id="301803">
    <molecule id="Q8BP56-2"/>
</dbReference>
<dbReference type="ProteomicsDB" id="301804">
    <molecule id="Q8BP56-3"/>
</dbReference>
<dbReference type="Pumba" id="Q8BP56"/>
<dbReference type="Antibodypedia" id="48910">
    <property type="antibodies" value="22 antibodies from 14 providers"/>
</dbReference>
<dbReference type="DNASU" id="212974"/>
<dbReference type="Ensembl" id="ENSMUST00000079403.11">
    <molecule id="Q8BP56-1"/>
    <property type="protein sequence ID" value="ENSMUSP00000078372.5"/>
    <property type="gene ID" value="ENSMUSG00000062031.14"/>
</dbReference>
<dbReference type="Ensembl" id="ENSMUST00000164580.3">
    <molecule id="Q8BP56-3"/>
    <property type="protein sequence ID" value="ENSMUSP00000128214.3"/>
    <property type="gene ID" value="ENSMUSG00000062031.14"/>
</dbReference>
<dbReference type="GeneID" id="212974"/>
<dbReference type="KEGG" id="mmu:212974"/>
<dbReference type="UCSC" id="uc009kiw.1">
    <molecule id="Q8BP56-1"/>
    <property type="organism name" value="mouse"/>
</dbReference>
<dbReference type="AGR" id="MGI:2444047"/>
<dbReference type="CTD" id="80162"/>
<dbReference type="MGI" id="MGI:2444047">
    <property type="gene designation" value="Pgghg"/>
</dbReference>
<dbReference type="VEuPathDB" id="HostDB:ENSMUSG00000062031"/>
<dbReference type="eggNOG" id="KOG4125">
    <property type="taxonomic scope" value="Eukaryota"/>
</dbReference>
<dbReference type="GeneTree" id="ENSGT00390000006297"/>
<dbReference type="HOGENOM" id="CLU_006285_4_2_1"/>
<dbReference type="InParanoid" id="Q8BP56"/>
<dbReference type="OMA" id="PAMTYSM"/>
<dbReference type="PhylomeDB" id="Q8BP56"/>
<dbReference type="TreeFam" id="TF300109"/>
<dbReference type="BioGRID-ORCS" id="212974">
    <property type="hits" value="2 hits in 79 CRISPR screens"/>
</dbReference>
<dbReference type="PRO" id="PR:Q8BP56"/>
<dbReference type="Proteomes" id="UP000000589">
    <property type="component" value="Chromosome 7"/>
</dbReference>
<dbReference type="RNAct" id="Q8BP56">
    <property type="molecule type" value="protein"/>
</dbReference>
<dbReference type="Bgee" id="ENSMUSG00000062031">
    <property type="expression patterns" value="Expressed in external carotid artery and 203 other cell types or tissues"/>
</dbReference>
<dbReference type="ExpressionAtlas" id="Q8BP56">
    <property type="expression patterns" value="baseline and differential"/>
</dbReference>
<dbReference type="GO" id="GO:0005829">
    <property type="term" value="C:cytosol"/>
    <property type="evidence" value="ECO:0007669"/>
    <property type="project" value="Ensembl"/>
</dbReference>
<dbReference type="GO" id="GO:0047402">
    <property type="term" value="F:protein-glucosylgalactosylhydroxylysine glucosidase activity"/>
    <property type="evidence" value="ECO:0007669"/>
    <property type="project" value="UniProtKB-EC"/>
</dbReference>
<dbReference type="GO" id="GO:0005975">
    <property type="term" value="P:carbohydrate metabolic process"/>
    <property type="evidence" value="ECO:0007669"/>
    <property type="project" value="Ensembl"/>
</dbReference>
<dbReference type="FunFam" id="1.50.10.10:FF:000023">
    <property type="entry name" value="Protein-glucosylgalactosylhydroxylysine glucosidase"/>
    <property type="match status" value="1"/>
</dbReference>
<dbReference type="Gene3D" id="1.50.10.10">
    <property type="match status" value="1"/>
</dbReference>
<dbReference type="InterPro" id="IPR008928">
    <property type="entry name" value="6-hairpin_glycosidase_sf"/>
</dbReference>
<dbReference type="InterPro" id="IPR012341">
    <property type="entry name" value="6hp_glycosidase-like_sf"/>
</dbReference>
<dbReference type="InterPro" id="IPR005195">
    <property type="entry name" value="Glyco_hydro_65_M"/>
</dbReference>
<dbReference type="PANTHER" id="PTHR11051">
    <property type="entry name" value="GLYCOSYL HYDROLASE-RELATED"/>
    <property type="match status" value="1"/>
</dbReference>
<dbReference type="PANTHER" id="PTHR11051:SF8">
    <property type="entry name" value="PROTEIN-GLUCOSYLGALACTOSYLHYDROXYLYSINE GLUCOSIDASE"/>
    <property type="match status" value="1"/>
</dbReference>
<dbReference type="Pfam" id="PF03632">
    <property type="entry name" value="Glyco_hydro_65m"/>
    <property type="match status" value="1"/>
</dbReference>
<dbReference type="SUPFAM" id="SSF48208">
    <property type="entry name" value="Six-hairpin glycosidases"/>
    <property type="match status" value="1"/>
</dbReference>
<gene>
    <name evidence="6" type="primary">Pgghg</name>
    <name evidence="6" type="synonym">Athl1</name>
</gene>
<comment type="function">
    <text evidence="2">Catalyzes the hydrolysis of glucose from the disaccharide unit linked to hydroxylysine residues of collagen and collagen-like proteins.</text>
</comment>
<comment type="catalytic activity">
    <reaction evidence="2">
        <text>(5R)-5-O-[alpha-D-glucosyl-(1-&gt;2)-beta-D-galactosyl]-5-hydroxy-L-lysyl-[collagen] + H2O = (5R)-5-O-(beta-D-galactosyl)-5-hydroxy-L-lysyl-[collagen] + D-glucose</text>
        <dbReference type="Rhea" id="RHEA:11068"/>
        <dbReference type="Rhea" id="RHEA-COMP:12753"/>
        <dbReference type="Rhea" id="RHEA-COMP:12754"/>
        <dbReference type="ChEBI" id="CHEBI:4167"/>
        <dbReference type="ChEBI" id="CHEBI:15377"/>
        <dbReference type="ChEBI" id="CHEBI:133443"/>
        <dbReference type="ChEBI" id="CHEBI:133452"/>
        <dbReference type="EC" id="3.2.1.107"/>
    </reaction>
</comment>
<comment type="alternative products">
    <event type="alternative splicing"/>
    <isoform>
        <id>Q8BP56-1</id>
        <name>1</name>
        <sequence type="displayed"/>
    </isoform>
    <isoform>
        <id>Q8BP56-2</id>
        <name>2</name>
        <sequence type="described" ref="VSP_032897 VSP_032898 VSP_032899"/>
    </isoform>
    <isoform>
        <id>Q8BP56-3</id>
        <name>3</name>
        <sequence type="described" ref="VSP_032900"/>
    </isoform>
</comment>
<comment type="similarity">
    <text evidence="5">Belongs to the glycosyl hydrolase 65 family.</text>
</comment>
<comment type="sequence caution" evidence="5">
    <conflict type="erroneous initiation">
        <sequence resource="EMBL-CDS" id="BAD90165"/>
    </conflict>
    <text>Extended N-terminus.</text>
</comment>
<keyword id="KW-0025">Alternative splicing</keyword>
<keyword id="KW-0326">Glycosidase</keyword>
<keyword id="KW-0378">Hydrolase</keyword>
<keyword id="KW-1185">Reference proteome</keyword>
<reference key="1">
    <citation type="journal article" date="2005" name="Science">
        <title>The transcriptional landscape of the mammalian genome.</title>
        <authorList>
            <person name="Carninci P."/>
            <person name="Kasukawa T."/>
            <person name="Katayama S."/>
            <person name="Gough J."/>
            <person name="Frith M.C."/>
            <person name="Maeda N."/>
            <person name="Oyama R."/>
            <person name="Ravasi T."/>
            <person name="Lenhard B."/>
            <person name="Wells C."/>
            <person name="Kodzius R."/>
            <person name="Shimokawa K."/>
            <person name="Bajic V.B."/>
            <person name="Brenner S.E."/>
            <person name="Batalov S."/>
            <person name="Forrest A.R."/>
            <person name="Zavolan M."/>
            <person name="Davis M.J."/>
            <person name="Wilming L.G."/>
            <person name="Aidinis V."/>
            <person name="Allen J.E."/>
            <person name="Ambesi-Impiombato A."/>
            <person name="Apweiler R."/>
            <person name="Aturaliya R.N."/>
            <person name="Bailey T.L."/>
            <person name="Bansal M."/>
            <person name="Baxter L."/>
            <person name="Beisel K.W."/>
            <person name="Bersano T."/>
            <person name="Bono H."/>
            <person name="Chalk A.M."/>
            <person name="Chiu K.P."/>
            <person name="Choudhary V."/>
            <person name="Christoffels A."/>
            <person name="Clutterbuck D.R."/>
            <person name="Crowe M.L."/>
            <person name="Dalla E."/>
            <person name="Dalrymple B.P."/>
            <person name="de Bono B."/>
            <person name="Della Gatta G."/>
            <person name="di Bernardo D."/>
            <person name="Down T."/>
            <person name="Engstrom P."/>
            <person name="Fagiolini M."/>
            <person name="Faulkner G."/>
            <person name="Fletcher C.F."/>
            <person name="Fukushima T."/>
            <person name="Furuno M."/>
            <person name="Futaki S."/>
            <person name="Gariboldi M."/>
            <person name="Georgii-Hemming P."/>
            <person name="Gingeras T.R."/>
            <person name="Gojobori T."/>
            <person name="Green R.E."/>
            <person name="Gustincich S."/>
            <person name="Harbers M."/>
            <person name="Hayashi Y."/>
            <person name="Hensch T.K."/>
            <person name="Hirokawa N."/>
            <person name="Hill D."/>
            <person name="Huminiecki L."/>
            <person name="Iacono M."/>
            <person name="Ikeo K."/>
            <person name="Iwama A."/>
            <person name="Ishikawa T."/>
            <person name="Jakt M."/>
            <person name="Kanapin A."/>
            <person name="Katoh M."/>
            <person name="Kawasawa Y."/>
            <person name="Kelso J."/>
            <person name="Kitamura H."/>
            <person name="Kitano H."/>
            <person name="Kollias G."/>
            <person name="Krishnan S.P."/>
            <person name="Kruger A."/>
            <person name="Kummerfeld S.K."/>
            <person name="Kurochkin I.V."/>
            <person name="Lareau L.F."/>
            <person name="Lazarevic D."/>
            <person name="Lipovich L."/>
            <person name="Liu J."/>
            <person name="Liuni S."/>
            <person name="McWilliam S."/>
            <person name="Madan Babu M."/>
            <person name="Madera M."/>
            <person name="Marchionni L."/>
            <person name="Matsuda H."/>
            <person name="Matsuzawa S."/>
            <person name="Miki H."/>
            <person name="Mignone F."/>
            <person name="Miyake S."/>
            <person name="Morris K."/>
            <person name="Mottagui-Tabar S."/>
            <person name="Mulder N."/>
            <person name="Nakano N."/>
            <person name="Nakauchi H."/>
            <person name="Ng P."/>
            <person name="Nilsson R."/>
            <person name="Nishiguchi S."/>
            <person name="Nishikawa S."/>
            <person name="Nori F."/>
            <person name="Ohara O."/>
            <person name="Okazaki Y."/>
            <person name="Orlando V."/>
            <person name="Pang K.C."/>
            <person name="Pavan W.J."/>
            <person name="Pavesi G."/>
            <person name="Pesole G."/>
            <person name="Petrovsky N."/>
            <person name="Piazza S."/>
            <person name="Reed J."/>
            <person name="Reid J.F."/>
            <person name="Ring B.Z."/>
            <person name="Ringwald M."/>
            <person name="Rost B."/>
            <person name="Ruan Y."/>
            <person name="Salzberg S.L."/>
            <person name="Sandelin A."/>
            <person name="Schneider C."/>
            <person name="Schoenbach C."/>
            <person name="Sekiguchi K."/>
            <person name="Semple C.A."/>
            <person name="Seno S."/>
            <person name="Sessa L."/>
            <person name="Sheng Y."/>
            <person name="Shibata Y."/>
            <person name="Shimada H."/>
            <person name="Shimada K."/>
            <person name="Silva D."/>
            <person name="Sinclair B."/>
            <person name="Sperling S."/>
            <person name="Stupka E."/>
            <person name="Sugiura K."/>
            <person name="Sultana R."/>
            <person name="Takenaka Y."/>
            <person name="Taki K."/>
            <person name="Tammoja K."/>
            <person name="Tan S.L."/>
            <person name="Tang S."/>
            <person name="Taylor M.S."/>
            <person name="Tegner J."/>
            <person name="Teichmann S.A."/>
            <person name="Ueda H.R."/>
            <person name="van Nimwegen E."/>
            <person name="Verardo R."/>
            <person name="Wei C.L."/>
            <person name="Yagi K."/>
            <person name="Yamanishi H."/>
            <person name="Zabarovsky E."/>
            <person name="Zhu S."/>
            <person name="Zimmer A."/>
            <person name="Hide W."/>
            <person name="Bult C."/>
            <person name="Grimmond S.M."/>
            <person name="Teasdale R.D."/>
            <person name="Liu E.T."/>
            <person name="Brusic V."/>
            <person name="Quackenbush J."/>
            <person name="Wahlestedt C."/>
            <person name="Mattick J.S."/>
            <person name="Hume D.A."/>
            <person name="Kai C."/>
            <person name="Sasaki D."/>
            <person name="Tomaru Y."/>
            <person name="Fukuda S."/>
            <person name="Kanamori-Katayama M."/>
            <person name="Suzuki M."/>
            <person name="Aoki J."/>
            <person name="Arakawa T."/>
            <person name="Iida J."/>
            <person name="Imamura K."/>
            <person name="Itoh M."/>
            <person name="Kato T."/>
            <person name="Kawaji H."/>
            <person name="Kawagashira N."/>
            <person name="Kawashima T."/>
            <person name="Kojima M."/>
            <person name="Kondo S."/>
            <person name="Konno H."/>
            <person name="Nakano K."/>
            <person name="Ninomiya N."/>
            <person name="Nishio T."/>
            <person name="Okada M."/>
            <person name="Plessy C."/>
            <person name="Shibata K."/>
            <person name="Shiraki T."/>
            <person name="Suzuki S."/>
            <person name="Tagami M."/>
            <person name="Waki K."/>
            <person name="Watahiki A."/>
            <person name="Okamura-Oho Y."/>
            <person name="Suzuki H."/>
            <person name="Kawai J."/>
            <person name="Hayashizaki Y."/>
        </authorList>
    </citation>
    <scope>NUCLEOTIDE SEQUENCE [LARGE SCALE MRNA] (ISOFORM 1)</scope>
    <source>
        <strain>C57BL/6J</strain>
    </source>
</reference>
<reference key="2">
    <citation type="submission" date="2005-02" db="EMBL/GenBank/DDBJ databases">
        <title>Prediction of the coding sequences of mouse homologues of KIAA gene. The complete nucleotide sequences of mouse KIAA-homologous cDNAs identified by screening of terminal sequences of cDNA clones randomly sampled from size-fractionated libraries.</title>
        <authorList>
            <person name="Okazaki N."/>
            <person name="Kikuno R.F."/>
            <person name="Ohara R."/>
            <person name="Inamoto S."/>
            <person name="Nagase T."/>
            <person name="Ohara O."/>
            <person name="Koga H."/>
        </authorList>
    </citation>
    <scope>NUCLEOTIDE SEQUENCE [LARGE SCALE MRNA] (ISOFORM 2)</scope>
    <source>
        <tissue>Pancreatic islet</tissue>
    </source>
</reference>
<reference key="3">
    <citation type="journal article" date="2004" name="Genome Res.">
        <title>The status, quality, and expansion of the NIH full-length cDNA project: the Mammalian Gene Collection (MGC).</title>
        <authorList>
            <consortium name="The MGC Project Team"/>
        </authorList>
    </citation>
    <scope>NUCLEOTIDE SEQUENCE [LARGE SCALE MRNA] (ISOFORM 1)</scope>
    <scope>NUCLEOTIDE SEQUENCE [LARGE SCALE MRNA] OF 77-690 (ISOFORM 3)</scope>
    <source>
        <strain>C57BL/6J</strain>
        <strain>Czech II</strain>
        <tissue>Brain</tissue>
        <tissue>Mammary tumor</tissue>
    </source>
</reference>
<reference key="4">
    <citation type="journal article" date="2010" name="Cell">
        <title>A tissue-specific atlas of mouse protein phosphorylation and expression.</title>
        <authorList>
            <person name="Huttlin E.L."/>
            <person name="Jedrychowski M.P."/>
            <person name="Elias J.E."/>
            <person name="Goswami T."/>
            <person name="Rad R."/>
            <person name="Beausoleil S.A."/>
            <person name="Villen J."/>
            <person name="Haas W."/>
            <person name="Sowa M.E."/>
            <person name="Gygi S.P."/>
        </authorList>
    </citation>
    <scope>IDENTIFICATION BY MASS SPECTROMETRY [LARGE SCALE ANALYSIS]</scope>
    <source>
        <tissue>Liver</tissue>
        <tissue>Lung</tissue>
        <tissue>Spleen</tissue>
    </source>
</reference>
<evidence type="ECO:0000250" key="1">
    <source>
        <dbReference type="UniProtKB" id="D6XZ22"/>
    </source>
</evidence>
<evidence type="ECO:0000250" key="2">
    <source>
        <dbReference type="UniProtKB" id="Q32M88"/>
    </source>
</evidence>
<evidence type="ECO:0000303" key="3">
    <source>
    </source>
</evidence>
<evidence type="ECO:0000303" key="4">
    <source ref="2"/>
</evidence>
<evidence type="ECO:0000305" key="5"/>
<evidence type="ECO:0000312" key="6">
    <source>
        <dbReference type="MGI" id="MGI:2444047"/>
    </source>
</evidence>
<feature type="chain" id="PRO_0000329005" description="Protein-glucosylgalactosylhydroxylysine glucosidase">
    <location>
        <begin position="1"/>
        <end position="690"/>
    </location>
</feature>
<feature type="active site" description="Proton donor" evidence="2">
    <location>
        <position position="429"/>
    </location>
</feature>
<feature type="binding site" evidence="1">
    <location>
        <begin position="299"/>
        <end position="300"/>
    </location>
    <ligand>
        <name>substrate</name>
    </ligand>
</feature>
<feature type="binding site" evidence="1">
    <location>
        <begin position="497"/>
        <end position="498"/>
    </location>
    <ligand>
        <name>substrate</name>
    </ligand>
</feature>
<feature type="splice variant" id="VSP_032897" description="In isoform 2." evidence="4">
    <original>DIWMFPNILMFHPEAARAILEYRVRTLGGALKNGQNLGYQGAKFAWESASTGLEVCPEDIYGTQEIHINGAVALAFQLYYYYTQDSKLFQEDGGWDVVSSVAEFWCSRVEWSSQDKMYHLKGVMPPDEYHSGVNNSVYTNVLVQNSL</original>
    <variation>VHPTLHWLHRGSCMQRFRALP</variation>
    <location>
        <begin position="302"/>
        <end position="448"/>
    </location>
</feature>
<feature type="splice variant" id="VSP_032898" description="In isoform 2." evidence="4">
    <location>
        <begin position="538"/>
        <end position="608"/>
    </location>
</feature>
<feature type="splice variant" id="VSP_032900" description="In isoform 3." evidence="3">
    <original>GQKVSFPHSAGRIQRSSP</original>
    <variation>EGLLSPLSWPDTKVIPIAAQKFFRGS</variation>
    <location>
        <begin position="673"/>
        <end position="690"/>
    </location>
</feature>
<feature type="splice variant" id="VSP_032899" description="In isoform 2." evidence="4">
    <original>QKVSFPHSAGRIQRSSP</original>
    <variation>RE</variation>
    <location>
        <begin position="674"/>
        <end position="690"/>
    </location>
</feature>
<feature type="sequence conflict" description="In Ref. 2; BAD90165." evidence="5" ref="2">
    <original>H</original>
    <variation>Y</variation>
    <location>
        <position position="277"/>
    </location>
</feature>
<feature type="sequence conflict" description="In Ref. 3; BC023151." evidence="5" ref="3">
    <original>S</original>
    <variation>P</variation>
    <location>
        <position position="529"/>
    </location>
</feature>
<proteinExistence type="evidence at protein level"/>
<sequence>MDGSEDDPTIFSARCLPSDPRLWATVTNSYLGTRVYHDTIHINGVYNGAVGDTHRASLPSPLNVQLEAPAGTEQLTETFTLDTNTGSFLHTLEGPSFRASQRIYAHRVLPHVLVFSVSIARLTTGNKPITVPLRADFSPESPDLDLRVGPDFQGLRYLHGHVLNPEQPGEPQQEVHMLWMPVPPALTLGEEEKDRTWEFLTVVGSSQAEAQDCFAEALQLQTRGVLYTIHADSWGRLWAGCGLDVAGPLALRQALRGSLYYLFSELPQPGTQGFISHGLSPGGLSNGSKEECYWGHIFWDQDIWMFPNILMFHPEAARAILEYRVRTLGGALKNGQNLGYQGAKFAWESASTGLEVCPEDIYGTQEIHINGAVALAFQLYYYYTQDSKLFQEDGGWDVVSSVAEFWCSRVEWSSQDKMYHLKGVMPPDEYHSGVNNSVYTNVLVQNSLHFAAALAKDLGLPIRKQWLEVADRIKIPFDSEQNFHPEFDGYERGEEVKQADVVLLGYPVPFPLTPDIRRKNLETYEAVTSPQGPAMTWSMFAVGWMELRDPSRAQVHLSRSFANVTEPFKVWTENADGSGAVNFLTGMGGFLQAALFGCTGFRITEAGVTFDPLCPDLVSRVSVSGISYLGNKINFAFSKDSVTLEVTARAEPWAPLLEAELWPSLAHLPLTPGQKVSFPHSAGRIQRSSP</sequence>